<keyword id="KW-0007">Acetylation</keyword>
<keyword id="KW-0025">Alternative splicing</keyword>
<keyword id="KW-0090">Biological rhythms</keyword>
<keyword id="KW-1003">Cell membrane</keyword>
<keyword id="KW-0168">Coated pit</keyword>
<keyword id="KW-0963">Cytoplasm</keyword>
<keyword id="KW-0968">Cytoplasmic vesicle</keyword>
<keyword id="KW-0903">Direct protein sequencing</keyword>
<keyword id="KW-0254">Endocytosis</keyword>
<keyword id="KW-0967">Endosome</keyword>
<keyword id="KW-0325">Glycoprotein</keyword>
<keyword id="KW-0333">Golgi apparatus</keyword>
<keyword id="KW-0342">GTP-binding</keyword>
<keyword id="KW-0378">Hydrolase</keyword>
<keyword id="KW-1017">Isopeptide bond</keyword>
<keyword id="KW-0446">Lipid-binding</keyword>
<keyword id="KW-0458">Lysosome</keyword>
<keyword id="KW-0472">Membrane</keyword>
<keyword id="KW-0496">Mitochondrion</keyword>
<keyword id="KW-1000">Mitochondrion outer membrane</keyword>
<keyword id="KW-1210">Necrosis</keyword>
<keyword id="KW-0547">Nucleotide-binding</keyword>
<keyword id="KW-0576">Peroxisome</keyword>
<keyword id="KW-0597">Phosphoprotein</keyword>
<keyword id="KW-1185">Reference proteome</keyword>
<keyword id="KW-0702">S-nitrosylation</keyword>
<keyword id="KW-0770">Synapse</keyword>
<keyword id="KW-0832">Ubl conjugation</keyword>
<feature type="chain" id="PRO_0000206567" description="Dynamin-1-like protein">
    <location>
        <begin position="1"/>
        <end position="736"/>
    </location>
</feature>
<feature type="domain" description="Dynamin-type G" evidence="5">
    <location>
        <begin position="22"/>
        <end position="302"/>
    </location>
</feature>
<feature type="domain" description="GED" evidence="4">
    <location>
        <begin position="644"/>
        <end position="735"/>
    </location>
</feature>
<feature type="region of interest" description="G1 motif" evidence="5">
    <location>
        <begin position="32"/>
        <end position="39"/>
    </location>
</feature>
<feature type="region of interest" description="G2 motif" evidence="5">
    <location>
        <begin position="58"/>
        <end position="60"/>
    </location>
</feature>
<feature type="region of interest" description="G3 motif" evidence="5">
    <location>
        <begin position="146"/>
        <end position="149"/>
    </location>
</feature>
<feature type="region of interest" description="G4 motif" evidence="5">
    <location>
        <begin position="215"/>
        <end position="218"/>
    </location>
</feature>
<feature type="region of interest" description="G5 motif" evidence="5">
    <location>
        <begin position="245"/>
        <end position="248"/>
    </location>
</feature>
<feature type="region of interest" description="Middle domain" evidence="2">
    <location>
        <begin position="344"/>
        <end position="489"/>
    </location>
</feature>
<feature type="region of interest" description="Interaction with GSK3B" evidence="2">
    <location>
        <begin position="448"/>
        <end position="685"/>
    </location>
</feature>
<feature type="region of interest" description="B domain" evidence="2">
    <location>
        <begin position="502"/>
        <end position="569"/>
    </location>
</feature>
<feature type="region of interest" description="Disordered" evidence="6">
    <location>
        <begin position="522"/>
        <end position="554"/>
    </location>
</feature>
<feature type="region of interest" description="C-terminal dimerization domain" evidence="1">
    <location>
        <begin position="542"/>
        <end position="736"/>
    </location>
</feature>
<feature type="region of interest" description="Disordered" evidence="6">
    <location>
        <begin position="566"/>
        <end position="588"/>
    </location>
</feature>
<feature type="region of interest" description="Important for homodimerization" evidence="2">
    <location>
        <begin position="654"/>
        <end position="668"/>
    </location>
</feature>
<feature type="binding site" evidence="2">
    <location>
        <begin position="32"/>
        <end position="40"/>
    </location>
    <ligand>
        <name>GTP</name>
        <dbReference type="ChEBI" id="CHEBI:37565"/>
    </ligand>
</feature>
<feature type="binding site" evidence="2">
    <location>
        <begin position="215"/>
        <end position="221"/>
    </location>
    <ligand>
        <name>GTP</name>
        <dbReference type="ChEBI" id="CHEBI:37565"/>
    </ligand>
</feature>
<feature type="binding site" evidence="2">
    <location>
        <begin position="246"/>
        <end position="249"/>
    </location>
    <ligand>
        <name>GTP</name>
        <dbReference type="ChEBI" id="CHEBI:37565"/>
    </ligand>
</feature>
<feature type="modified residue" description="N-acetylmethionine" evidence="2">
    <location>
        <position position="1"/>
    </location>
</feature>
<feature type="modified residue" description="Phosphoserine" evidence="2">
    <location>
        <position position="529"/>
    </location>
</feature>
<feature type="modified residue" description="N6-acetyllysine; alternate" evidence="24">
    <location>
        <position position="597"/>
    </location>
</feature>
<feature type="modified residue" description="Phosphoserine" evidence="2">
    <location>
        <position position="607"/>
    </location>
</feature>
<feature type="modified residue" description="Phosphoserine; by PINK1" evidence="16 23">
    <location>
        <position position="616"/>
    </location>
</feature>
<feature type="modified residue" description="Phosphoserine; by CAMK1 and PKA" evidence="2">
    <location>
        <position position="637"/>
    </location>
</feature>
<feature type="modified residue" description="S-nitrosocysteine" evidence="2">
    <location>
        <position position="644"/>
    </location>
</feature>
<feature type="glycosylation site" description="O-linked (GlcNAc) threonine" evidence="1">
    <location>
        <position position="585"/>
    </location>
</feature>
<feature type="glycosylation site" description="O-linked (GlcNAc) threonine" evidence="1">
    <location>
        <position position="586"/>
    </location>
</feature>
<feature type="cross-link" description="Glycyl lysine isopeptide (Lys-Gly) (interchain with G-Cter in SUMO)" evidence="1">
    <location>
        <position position="532"/>
    </location>
</feature>
<feature type="cross-link" description="Glycyl lysine isopeptide (Lys-Gly) (interchain with G-Cter in SUMO)" evidence="1">
    <location>
        <position position="535"/>
    </location>
</feature>
<feature type="cross-link" description="Glycyl lysine isopeptide (Lys-Gly) (interchain with G-Cter in SUMO)" evidence="1">
    <location>
        <position position="558"/>
    </location>
</feature>
<feature type="cross-link" description="Glycyl lysine isopeptide (Lys-Gly) (interchain with G-Cter in SUMO)" evidence="1">
    <location>
        <position position="568"/>
    </location>
</feature>
<feature type="cross-link" description="Glycyl lysine isopeptide (Lys-Gly) (interchain with G-Cter in SUMO)" evidence="1">
    <location>
        <position position="594"/>
    </location>
</feature>
<feature type="cross-link" description="Glycyl lysine isopeptide (Lys-Gly) (interchain with G-Cter in SUMO); alternate" evidence="1">
    <location>
        <position position="597"/>
    </location>
</feature>
<feature type="cross-link" description="Glycyl lysine isopeptide (Lys-Gly) (interchain with G-Cter in SUMO)" evidence="1">
    <location>
        <position position="606"/>
    </location>
</feature>
<feature type="cross-link" description="Glycyl lysine isopeptide (Lys-Gly) (interchain with G-Cter in SUMO)" evidence="1">
    <location>
        <position position="608"/>
    </location>
</feature>
<feature type="splice variant" id="VSP_062249" description="In isoform 4.">
    <original>MEALIPVINKLQDVFNTVGADIIQLPQIVVVGTQSSGKSSVLESLVGRDLLPRGTGVVTRRPLILQLVHVSPEDKRKTTGEENGVEAEEWGKFLHTKNK</original>
    <variation>M</variation>
    <location>
        <begin position="1"/>
        <end position="99"/>
    </location>
</feature>
<feature type="splice variant" id="VSP_062250" description="In isoform 6, isoform 10, isoform 11 and isoform 13.">
    <original>N</original>
    <variation>NDPATWKNSRHLSK</variation>
    <location>
        <position position="83"/>
    </location>
</feature>
<feature type="splice variant" id="VSP_062251" description="In isoform 14.">
    <original>G</original>
    <variation>GKFQSWNPATWKNSRHLSKG</variation>
    <location>
        <position position="84"/>
    </location>
</feature>
<feature type="splice variant" id="VSP_062252" description="In isoform 2 and isoform 7.">
    <original>G</original>
    <variation>GKFQSWR</variation>
    <location>
        <position position="84"/>
    </location>
</feature>
<feature type="splice variant" id="VSP_062253" description="In isoform 5.">
    <original>RRTLAVITKLDLMD</original>
    <variation>KGRCLYLMDVDLQW</variation>
    <location>
        <begin position="208"/>
        <end position="221"/>
    </location>
</feature>
<feature type="splice variant" id="VSP_062254" description="In isoform 5.">
    <location>
        <begin position="222"/>
        <end position="736"/>
    </location>
</feature>
<feature type="splice variant" id="VSP_062255" description="In isoform 3, isoform 7 and isoform 6.">
    <location>
        <begin position="533"/>
        <end position="569"/>
    </location>
</feature>
<feature type="splice variant" id="VSP_062256" description="In isoform 2, isoform 4, isoform 9 and isoform 11.">
    <location>
        <begin position="533"/>
        <end position="558"/>
    </location>
</feature>
<feature type="splice variant" id="VSP_062257" description="In isoform 8 and isoform 10.">
    <location>
        <begin position="559"/>
        <end position="569"/>
    </location>
</feature>
<feature type="mutagenesis site" description="Abolishes GTP hydrolysis." evidence="11">
    <original>T</original>
    <variation>A</variation>
    <location>
        <position position="59"/>
    </location>
</feature>
<feature type="mutagenesis site" description="Loss of activity and phosphorylation. Unable to rescue aberrant mitochondrial fission in PINK1 null mutant neurons." evidence="16">
    <original>S</original>
    <variation>A</variation>
    <location>
        <position position="616"/>
    </location>
</feature>
<feature type="sequence conflict" description="In Ref. 1; BAC06576." evidence="20" ref="1">
    <original>P</original>
    <variation>L</variation>
    <location>
        <position position="159"/>
    </location>
</feature>
<feature type="sequence conflict" description="In Ref. 1; BAC06576." evidence="20" ref="1">
    <original>Q</original>
    <variation>R</variation>
    <location>
        <position position="314"/>
    </location>
</feature>
<feature type="sequence conflict" description="In Ref. 3; BAC34640." evidence="20" ref="3">
    <original>E</original>
    <variation>A</variation>
    <location>
        <position position="513"/>
    </location>
</feature>
<feature type="mutagenesis site" description="Impairs lysosome localization. Impairs late endosome localization. Impairs cell membrane localization." evidence="13">
    <original>K</original>
    <variation>A</variation>
    <location sequence="Q8K1M6-14">
        <position position="38"/>
    </location>
</feature>
<feature type="mutagenesis site" description="Impairs lysosome localization. Impairs late endosome localization. Impairs cell membrane localization." evidence="13">
    <original>G</original>
    <variation>D</variation>
    <location sequence="Q8K1M6-14">
        <position position="369"/>
    </location>
</feature>
<accession>Q8K1M6</accession>
<accession>E9PUD2</accession>
<accession>Q8BNQ5</accession>
<accession>Q8BQ64</accession>
<accession>Q8CGD0</accession>
<accession>Q8K1A1</accession>
<proteinExistence type="evidence at protein level"/>
<protein>
    <recommendedName>
        <fullName evidence="20">Dynamin-1-like protein</fullName>
        <ecNumber evidence="11 13">3.6.5.5</ecNumber>
    </recommendedName>
    <alternativeName>
        <fullName>Dynamin family member proline-rich carboxyl-terminal domain less</fullName>
        <shortName evidence="19">Dymple</shortName>
    </alternativeName>
    <alternativeName>
        <fullName>Dynamin-related protein 1</fullName>
    </alternativeName>
</protein>
<evidence type="ECO:0000250" key="1"/>
<evidence type="ECO:0000250" key="2">
    <source>
        <dbReference type="UniProtKB" id="O00429"/>
    </source>
</evidence>
<evidence type="ECO:0000250" key="3">
    <source>
        <dbReference type="UniProtKB" id="O35303"/>
    </source>
</evidence>
<evidence type="ECO:0000255" key="4">
    <source>
        <dbReference type="PROSITE-ProRule" id="PRU00720"/>
    </source>
</evidence>
<evidence type="ECO:0000255" key="5">
    <source>
        <dbReference type="PROSITE-ProRule" id="PRU01055"/>
    </source>
</evidence>
<evidence type="ECO:0000256" key="6">
    <source>
        <dbReference type="SAM" id="MobiDB-lite"/>
    </source>
</evidence>
<evidence type="ECO:0000269" key="7">
    <source>
    </source>
</evidence>
<evidence type="ECO:0000269" key="8">
    <source>
    </source>
</evidence>
<evidence type="ECO:0000269" key="9">
    <source>
    </source>
</evidence>
<evidence type="ECO:0000269" key="10">
    <source>
    </source>
</evidence>
<evidence type="ECO:0000269" key="11">
    <source>
    </source>
</evidence>
<evidence type="ECO:0000269" key="12">
    <source>
    </source>
</evidence>
<evidence type="ECO:0000269" key="13">
    <source>
    </source>
</evidence>
<evidence type="ECO:0000269" key="14">
    <source>
    </source>
</evidence>
<evidence type="ECO:0000269" key="15">
    <source>
    </source>
</evidence>
<evidence type="ECO:0000269" key="16">
    <source>
    </source>
</evidence>
<evidence type="ECO:0000269" key="17">
    <source>
    </source>
</evidence>
<evidence type="ECO:0000303" key="18">
    <source>
    </source>
</evidence>
<evidence type="ECO:0000303" key="19">
    <source>
    </source>
</evidence>
<evidence type="ECO:0000305" key="20"/>
<evidence type="ECO:0000305" key="21">
    <source>
    </source>
</evidence>
<evidence type="ECO:0000312" key="22">
    <source>
        <dbReference type="MGI" id="MGI:1921256"/>
    </source>
</evidence>
<evidence type="ECO:0007744" key="23">
    <source>
    </source>
</evidence>
<evidence type="ECO:0007744" key="24">
    <source>
    </source>
</evidence>
<sequence length="736" mass="81825">MEALIPVINKLQDVFNTVGADIIQLPQIVVVGTQSSGKSSVLESLVGRDLLPRGTGVVTRRPLILQLVHVSPEDKRKTTGEENGVEAEEWGKFLHTKNKLYTDFDEIRQEIENETERISGNNKGVSPEPIHLKVFSPNVVNLTLVDLPGMTKVPVGDQPKDIELQIRELILRFISNPNSIILAVTAANTDMATSEALKISREVDPDGRRTLAVITKLDLMDAGTDAMDVLMGRVIPVKLGIIGVVNRSQLDINNKKSVTDSIRDEYAFLQKKYPSLANRNGTKYLARTLNRLLMHHIRDCLPELKTRINVLAAQYQSLLNSYGEPVDDKSATLLQLITKFATEYCNTIEGTAKYIETSELCGGARICYIFHETFGRTLESVDPLGGLNTIDILTAIRNATGPRPALFVPEVSFELLVKRQIKRLEEPSLRCVELVHEEMQRIIQHCSNYSTQELLRFPKLHDAIVEVVTCLLRKRLPVTNEMVHNLVAIELAYINTKHPDFADACGLMNNNIEEQRRNRLARELPSAGSRDKSSKVPSALAPASQEPPPAASAEADGKLIQDNRRETKNVPSAGGGIGDGGQEPTTGNWRGMLKTSKAEELLAEEKSKPIPIMPASPQKGHAVNLLDVPVPVARKLSAREQRDCEVIERLIKSYFLIVRKNIQDSVPKAVMHFLVNHVKDTLQSELVGQLYKSSLLDDLLTESEDMAQRRKEAADMLKALQGASQIIAEIRETHLW</sequence>
<dbReference type="EC" id="3.6.5.5" evidence="11 13"/>
<dbReference type="EMBL" id="AB079133">
    <property type="protein sequence ID" value="BAC06576.1"/>
    <property type="molecule type" value="mRNA"/>
</dbReference>
<dbReference type="EMBL" id="AK051443">
    <property type="protein sequence ID" value="BAC34640.1"/>
    <property type="molecule type" value="mRNA"/>
</dbReference>
<dbReference type="EMBL" id="AK080871">
    <property type="protein sequence ID" value="BAC38054.1"/>
    <property type="molecule type" value="mRNA"/>
</dbReference>
<dbReference type="EMBL" id="BC027538">
    <property type="protein sequence ID" value="AAH27538.1"/>
    <property type="molecule type" value="mRNA"/>
</dbReference>
<dbReference type="EMBL" id="BC040777">
    <property type="protein sequence ID" value="AAH40777.1"/>
    <property type="molecule type" value="mRNA"/>
</dbReference>
<dbReference type="EMBL" id="BC079635">
    <property type="protein sequence ID" value="AAH79635.1"/>
    <property type="molecule type" value="mRNA"/>
</dbReference>
<dbReference type="CCDS" id="CCDS27984.1">
    <molecule id="Q8K1M6-3"/>
</dbReference>
<dbReference type="CCDS" id="CCDS27985.1">
    <molecule id="Q8K1M6-6"/>
</dbReference>
<dbReference type="CCDS" id="CCDS70689.1">
    <molecule id="Q8K1M6-2"/>
</dbReference>
<dbReference type="CCDS" id="CCDS88885.1">
    <molecule id="Q8K1M6-4"/>
</dbReference>
<dbReference type="RefSeq" id="NP_001021118.1">
    <molecule id="Q8K1M6-3"/>
    <property type="nucleotide sequence ID" value="NM_001025947.3"/>
</dbReference>
<dbReference type="RefSeq" id="NP_001263269.1">
    <molecule id="Q8K1M6-2"/>
    <property type="nucleotide sequence ID" value="NM_001276340.2"/>
</dbReference>
<dbReference type="RefSeq" id="NP_001263270.1">
    <molecule id="Q8K1M6-4"/>
    <property type="nucleotide sequence ID" value="NM_001276341.2"/>
</dbReference>
<dbReference type="RefSeq" id="NP_001346936.1">
    <molecule id="Q8K1M6-14"/>
    <property type="nucleotide sequence ID" value="NM_001360007.2"/>
</dbReference>
<dbReference type="RefSeq" id="NP_001346937.1">
    <molecule id="Q8K1M6-13"/>
    <property type="nucleotide sequence ID" value="NM_001360008.2"/>
</dbReference>
<dbReference type="RefSeq" id="NP_001346939.1">
    <molecule id="Q8K1M6-11"/>
    <property type="nucleotide sequence ID" value="NM_001360010.2"/>
</dbReference>
<dbReference type="RefSeq" id="NP_001392181.1">
    <molecule id="Q8K1M6-4"/>
    <property type="nucleotide sequence ID" value="NM_001405252.1"/>
</dbReference>
<dbReference type="RefSeq" id="NP_001392183.1">
    <molecule id="Q8K1M6-10"/>
    <property type="nucleotide sequence ID" value="NM_001405254.1"/>
</dbReference>
<dbReference type="RefSeq" id="NP_001392184.1">
    <molecule id="Q8K1M6-12"/>
    <property type="nucleotide sequence ID" value="NM_001405255.1"/>
</dbReference>
<dbReference type="RefSeq" id="NP_001392187.1">
    <molecule id="Q8K1M6-8"/>
    <property type="nucleotide sequence ID" value="NM_001405258.1"/>
</dbReference>
<dbReference type="RefSeq" id="NP_001392189.1">
    <molecule id="Q8K1M6-9"/>
    <property type="nucleotide sequence ID" value="NM_001405260.1"/>
</dbReference>
<dbReference type="RefSeq" id="NP_001392190.1">
    <molecule id="Q8K1M6-7"/>
    <property type="nucleotide sequence ID" value="NM_001405261.1"/>
</dbReference>
<dbReference type="RefSeq" id="NP_690029.2">
    <molecule id="Q8K1M6-6"/>
    <property type="nucleotide sequence ID" value="NM_152816.4"/>
</dbReference>
<dbReference type="RefSeq" id="XP_006522691.1">
    <property type="nucleotide sequence ID" value="XM_006522628.3"/>
</dbReference>
<dbReference type="RefSeq" id="XP_006522692.1">
    <property type="nucleotide sequence ID" value="XM_006522629.3"/>
</dbReference>
<dbReference type="RefSeq" id="XP_006522695.1">
    <property type="nucleotide sequence ID" value="XM_006522632.3"/>
</dbReference>
<dbReference type="RefSeq" id="XP_006522696.1">
    <property type="nucleotide sequence ID" value="XM_006522633.2"/>
</dbReference>
<dbReference type="RefSeq" id="XP_006522698.1">
    <property type="nucleotide sequence ID" value="XM_006522635.3"/>
</dbReference>
<dbReference type="RefSeq" id="XP_006522700.1">
    <property type="nucleotide sequence ID" value="XM_006522637.2"/>
</dbReference>
<dbReference type="RefSeq" id="XP_017172629.1">
    <property type="nucleotide sequence ID" value="XM_017317140.1"/>
</dbReference>
<dbReference type="SMR" id="Q8K1M6"/>
<dbReference type="BioGRID" id="216417">
    <property type="interactions" value="30"/>
</dbReference>
<dbReference type="CORUM" id="Q8K1M6"/>
<dbReference type="DIP" id="DIP-54818N"/>
<dbReference type="FunCoup" id="Q8K1M6">
    <property type="interactions" value="4648"/>
</dbReference>
<dbReference type="IntAct" id="Q8K1M6">
    <property type="interactions" value="34"/>
</dbReference>
<dbReference type="MINT" id="Q8K1M6"/>
<dbReference type="STRING" id="10090.ENSMUSP00000155155"/>
<dbReference type="ChEMBL" id="CHEMBL2331072"/>
<dbReference type="GlyCosmos" id="Q8K1M6">
    <property type="glycosylation" value="2 sites, No reported glycans"/>
</dbReference>
<dbReference type="GlyGen" id="Q8K1M6">
    <property type="glycosylation" value="2 sites, 1 O-linked glycan (2 sites)"/>
</dbReference>
<dbReference type="iPTMnet" id="Q8K1M6"/>
<dbReference type="PhosphoSitePlus" id="Q8K1M6"/>
<dbReference type="SwissPalm" id="Q8K1M6"/>
<dbReference type="jPOST" id="Q8K1M6"/>
<dbReference type="PaxDb" id="10090-ENSMUSP00000111415"/>
<dbReference type="PeptideAtlas" id="Q8K1M6"/>
<dbReference type="ProteomicsDB" id="277359">
    <molecule id="Q8K1M6-2"/>
</dbReference>
<dbReference type="ProteomicsDB" id="277360">
    <molecule id="Q8K1M6-3"/>
</dbReference>
<dbReference type="ProteomicsDB" id="277361">
    <molecule id="Q8K1M6-4"/>
</dbReference>
<dbReference type="ProteomicsDB" id="277362">
    <molecule id="Q8K1M6-5"/>
</dbReference>
<dbReference type="ProteomicsDB" id="347036"/>
<dbReference type="Pumba" id="Q8K1M6"/>
<dbReference type="Antibodypedia" id="4096">
    <property type="antibodies" value="731 antibodies from 38 providers"/>
</dbReference>
<dbReference type="DNASU" id="74006"/>
<dbReference type="Ensembl" id="ENSMUST00000023477.15">
    <molecule id="Q8K1M6-3"/>
    <property type="protein sequence ID" value="ENSMUSP00000023477.8"/>
    <property type="gene ID" value="ENSMUSG00000022789.16"/>
</dbReference>
<dbReference type="Ensembl" id="ENSMUST00000096229.11">
    <molecule id="Q8K1M6-6"/>
    <property type="protein sequence ID" value="ENSMUSP00000093945.4"/>
    <property type="gene ID" value="ENSMUSG00000022789.16"/>
</dbReference>
<dbReference type="Ensembl" id="ENSMUST00000230022.2">
    <molecule id="Q8K1M6-4"/>
    <property type="protein sequence ID" value="ENSMUSP00000155429.2"/>
    <property type="gene ID" value="ENSMUSG00000022789.16"/>
</dbReference>
<dbReference type="Ensembl" id="ENSMUST00000230038.2">
    <molecule id="Q8K1M6-5"/>
    <property type="protein sequence ID" value="ENSMUSP00000155605.2"/>
    <property type="gene ID" value="ENSMUSG00000022789.16"/>
</dbReference>
<dbReference type="Ensembl" id="ENSMUST00000230980.2">
    <molecule id="Q8K1M6-2"/>
    <property type="protein sequence ID" value="ENSMUSP00000155155.2"/>
    <property type="gene ID" value="ENSMUSG00000022789.16"/>
</dbReference>
<dbReference type="GeneID" id="74006"/>
<dbReference type="KEGG" id="mmu:74006"/>
<dbReference type="UCSC" id="uc007yij.2">
    <molecule id="Q8K1M6-12"/>
    <property type="organism name" value="mouse"/>
</dbReference>
<dbReference type="UCSC" id="uc007yik.2">
    <molecule id="Q8K1M6-4"/>
    <property type="organism name" value="mouse"/>
</dbReference>
<dbReference type="UCSC" id="uc007yim.2">
    <molecule id="Q8K1M6-3"/>
    <property type="organism name" value="mouse"/>
</dbReference>
<dbReference type="UCSC" id="uc007yin.2">
    <molecule id="Q8K1M6-2"/>
    <property type="organism name" value="mouse"/>
</dbReference>
<dbReference type="UCSC" id="uc007yio.2">
    <molecule id="Q8K1M6-5"/>
    <property type="organism name" value="mouse"/>
</dbReference>
<dbReference type="AGR" id="MGI:1921256"/>
<dbReference type="CTD" id="10059"/>
<dbReference type="MGI" id="MGI:1921256">
    <property type="gene designation" value="Dnm1l"/>
</dbReference>
<dbReference type="VEuPathDB" id="HostDB:ENSMUSG00000022789"/>
<dbReference type="eggNOG" id="KOG0446">
    <property type="taxonomic scope" value="Eukaryota"/>
</dbReference>
<dbReference type="GeneTree" id="ENSGT00940000155504"/>
<dbReference type="HOGENOM" id="CLU_008964_5_0_1"/>
<dbReference type="InParanoid" id="Q8K1M6"/>
<dbReference type="OMA" id="KICHNCG"/>
<dbReference type="PhylomeDB" id="Q8K1M6"/>
<dbReference type="TreeFam" id="TF352031"/>
<dbReference type="BRENDA" id="3.6.5.5">
    <property type="organism ID" value="3474"/>
</dbReference>
<dbReference type="Reactome" id="R-MMU-75153">
    <property type="pathway name" value="Apoptotic execution phase"/>
</dbReference>
<dbReference type="BioGRID-ORCS" id="74006">
    <property type="hits" value="27 hits in 80 CRISPR screens"/>
</dbReference>
<dbReference type="CD-CODE" id="CE726F99">
    <property type="entry name" value="Postsynaptic density"/>
</dbReference>
<dbReference type="ChiTaRS" id="Dnm1l">
    <property type="organism name" value="mouse"/>
</dbReference>
<dbReference type="PRO" id="PR:Q8K1M6"/>
<dbReference type="Proteomes" id="UP000000589">
    <property type="component" value="Chromosome 16"/>
</dbReference>
<dbReference type="RNAct" id="Q8K1M6">
    <property type="molecule type" value="protein"/>
</dbReference>
<dbReference type="Bgee" id="ENSMUSG00000022789">
    <property type="expression patterns" value="Expressed in ventral tegmental area and 257 other cell types or tissues"/>
</dbReference>
<dbReference type="ExpressionAtlas" id="Q8K1M6">
    <property type="expression patterns" value="baseline and differential"/>
</dbReference>
<dbReference type="GO" id="GO:0005903">
    <property type="term" value="C:brush border"/>
    <property type="evidence" value="ECO:0000314"/>
    <property type="project" value="UniProtKB"/>
</dbReference>
<dbReference type="GO" id="GO:0005905">
    <property type="term" value="C:clathrin-coated pit"/>
    <property type="evidence" value="ECO:0007669"/>
    <property type="project" value="UniProtKB-SubCell"/>
</dbReference>
<dbReference type="GO" id="GO:0005737">
    <property type="term" value="C:cytoplasm"/>
    <property type="evidence" value="ECO:0000314"/>
    <property type="project" value="MGI"/>
</dbReference>
<dbReference type="GO" id="GO:0005829">
    <property type="term" value="C:cytosol"/>
    <property type="evidence" value="ECO:0000314"/>
    <property type="project" value="UniProtKB"/>
</dbReference>
<dbReference type="GO" id="GO:0005783">
    <property type="term" value="C:endoplasmic reticulum"/>
    <property type="evidence" value="ECO:0007669"/>
    <property type="project" value="Ensembl"/>
</dbReference>
<dbReference type="GO" id="GO:0000139">
    <property type="term" value="C:Golgi membrane"/>
    <property type="evidence" value="ECO:0007669"/>
    <property type="project" value="Ensembl"/>
</dbReference>
<dbReference type="GO" id="GO:0005770">
    <property type="term" value="C:late endosome"/>
    <property type="evidence" value="ECO:0007669"/>
    <property type="project" value="UniProtKB-SubCell"/>
</dbReference>
<dbReference type="GO" id="GO:0005764">
    <property type="term" value="C:lysosome"/>
    <property type="evidence" value="ECO:0007669"/>
    <property type="project" value="UniProtKB-SubCell"/>
</dbReference>
<dbReference type="GO" id="GO:0005874">
    <property type="term" value="C:microtubule"/>
    <property type="evidence" value="ECO:0007669"/>
    <property type="project" value="Ensembl"/>
</dbReference>
<dbReference type="GO" id="GO:0015630">
    <property type="term" value="C:microtubule cytoskeleton"/>
    <property type="evidence" value="ECO:0000314"/>
    <property type="project" value="MGI"/>
</dbReference>
<dbReference type="GO" id="GO:0005741">
    <property type="term" value="C:mitochondrial outer membrane"/>
    <property type="evidence" value="ECO:0000314"/>
    <property type="project" value="UniProtKB"/>
</dbReference>
<dbReference type="GO" id="GO:0005739">
    <property type="term" value="C:mitochondrion"/>
    <property type="evidence" value="ECO:0000314"/>
    <property type="project" value="MGI"/>
</dbReference>
<dbReference type="GO" id="GO:0099073">
    <property type="term" value="C:mitochondrion-derived vesicle"/>
    <property type="evidence" value="ECO:0007669"/>
    <property type="project" value="Ensembl"/>
</dbReference>
<dbReference type="GO" id="GO:0048471">
    <property type="term" value="C:perinuclear region of cytoplasm"/>
    <property type="evidence" value="ECO:0007669"/>
    <property type="project" value="Ensembl"/>
</dbReference>
<dbReference type="GO" id="GO:0005777">
    <property type="term" value="C:peroxisome"/>
    <property type="evidence" value="ECO:0000314"/>
    <property type="project" value="UniProtKB"/>
</dbReference>
<dbReference type="GO" id="GO:0014069">
    <property type="term" value="C:postsynaptic density"/>
    <property type="evidence" value="ECO:0007669"/>
    <property type="project" value="UniProtKB-SubCell"/>
</dbReference>
<dbReference type="GO" id="GO:0098835">
    <property type="term" value="C:presynaptic endocytic zone membrane"/>
    <property type="evidence" value="ECO:0007669"/>
    <property type="project" value="Ensembl"/>
</dbReference>
<dbReference type="GO" id="GO:0032991">
    <property type="term" value="C:protein-containing complex"/>
    <property type="evidence" value="ECO:0007669"/>
    <property type="project" value="Ensembl"/>
</dbReference>
<dbReference type="GO" id="GO:0030672">
    <property type="term" value="C:synaptic vesicle membrane"/>
    <property type="evidence" value="ECO:0007669"/>
    <property type="project" value="UniProtKB-SubCell"/>
</dbReference>
<dbReference type="GO" id="GO:0051433">
    <property type="term" value="F:BH2 domain binding"/>
    <property type="evidence" value="ECO:0007669"/>
    <property type="project" value="Ensembl"/>
</dbReference>
<dbReference type="GO" id="GO:0030276">
    <property type="term" value="F:clathrin binding"/>
    <property type="evidence" value="ECO:0007669"/>
    <property type="project" value="Ensembl"/>
</dbReference>
<dbReference type="GO" id="GO:0005525">
    <property type="term" value="F:GTP binding"/>
    <property type="evidence" value="ECO:0007669"/>
    <property type="project" value="UniProtKB-KW"/>
</dbReference>
<dbReference type="GO" id="GO:0030742">
    <property type="term" value="F:GTP-dependent protein binding"/>
    <property type="evidence" value="ECO:0007669"/>
    <property type="project" value="Ensembl"/>
</dbReference>
<dbReference type="GO" id="GO:0003924">
    <property type="term" value="F:GTPase activity"/>
    <property type="evidence" value="ECO:0000250"/>
    <property type="project" value="UniProtKB"/>
</dbReference>
<dbReference type="GO" id="GO:0008289">
    <property type="term" value="F:lipid binding"/>
    <property type="evidence" value="ECO:0007669"/>
    <property type="project" value="UniProtKB-KW"/>
</dbReference>
<dbReference type="GO" id="GO:0042803">
    <property type="term" value="F:protein homodimerization activity"/>
    <property type="evidence" value="ECO:0000353"/>
    <property type="project" value="ParkinsonsUK-UCL"/>
</dbReference>
<dbReference type="GO" id="GO:0120283">
    <property type="term" value="F:protein serine/threonine kinase binding"/>
    <property type="evidence" value="ECO:0007669"/>
    <property type="project" value="Ensembl"/>
</dbReference>
<dbReference type="GO" id="GO:0044877">
    <property type="term" value="F:protein-containing complex binding"/>
    <property type="evidence" value="ECO:0007669"/>
    <property type="project" value="Ensembl"/>
</dbReference>
<dbReference type="GO" id="GO:0031267">
    <property type="term" value="F:small GTPase binding"/>
    <property type="evidence" value="ECO:0007669"/>
    <property type="project" value="Ensembl"/>
</dbReference>
<dbReference type="GO" id="GO:0031625">
    <property type="term" value="F:ubiquitin protein ligase binding"/>
    <property type="evidence" value="ECO:0007669"/>
    <property type="project" value="Ensembl"/>
</dbReference>
<dbReference type="GO" id="GO:0006816">
    <property type="term" value="P:calcium ion transport"/>
    <property type="evidence" value="ECO:0000315"/>
    <property type="project" value="MGI"/>
</dbReference>
<dbReference type="GO" id="GO:0071456">
    <property type="term" value="P:cellular response to hypoxia"/>
    <property type="evidence" value="ECO:0007669"/>
    <property type="project" value="Ensembl"/>
</dbReference>
<dbReference type="GO" id="GO:0071396">
    <property type="term" value="P:cellular response to lipid"/>
    <property type="evidence" value="ECO:0007669"/>
    <property type="project" value="Ensembl"/>
</dbReference>
<dbReference type="GO" id="GO:0060047">
    <property type="term" value="P:heart contraction"/>
    <property type="evidence" value="ECO:0000315"/>
    <property type="project" value="ParkinsonsUK-UCL"/>
</dbReference>
<dbReference type="GO" id="GO:0048312">
    <property type="term" value="P:intracellular distribution of mitochondria"/>
    <property type="evidence" value="ECO:0007669"/>
    <property type="project" value="Ensembl"/>
</dbReference>
<dbReference type="GO" id="GO:0000266">
    <property type="term" value="P:mitochondrial fission"/>
    <property type="evidence" value="ECO:0000315"/>
    <property type="project" value="UniProtKB"/>
</dbReference>
<dbReference type="GO" id="GO:0043653">
    <property type="term" value="P:mitochondrial fragmentation involved in apoptotic process"/>
    <property type="evidence" value="ECO:0007669"/>
    <property type="project" value="Ensembl"/>
</dbReference>
<dbReference type="GO" id="GO:0090149">
    <property type="term" value="P:mitochondrial membrane fission"/>
    <property type="evidence" value="ECO:0007669"/>
    <property type="project" value="Ensembl"/>
</dbReference>
<dbReference type="GO" id="GO:0007005">
    <property type="term" value="P:mitochondrion organization"/>
    <property type="evidence" value="ECO:0000315"/>
    <property type="project" value="MGI"/>
</dbReference>
<dbReference type="GO" id="GO:0160040">
    <property type="term" value="P:mitocytosis"/>
    <property type="evidence" value="ECO:0000315"/>
    <property type="project" value="MGI"/>
</dbReference>
<dbReference type="GO" id="GO:0010637">
    <property type="term" value="P:negative regulation of mitochondrial fusion"/>
    <property type="evidence" value="ECO:0007669"/>
    <property type="project" value="Ensembl"/>
</dbReference>
<dbReference type="GO" id="GO:0016559">
    <property type="term" value="P:peroxisome fission"/>
    <property type="evidence" value="ECO:0000315"/>
    <property type="project" value="UniProtKB"/>
</dbReference>
<dbReference type="GO" id="GO:0061003">
    <property type="term" value="P:positive regulation of dendritic spine morphogenesis"/>
    <property type="evidence" value="ECO:0007669"/>
    <property type="project" value="Ensembl"/>
</dbReference>
<dbReference type="GO" id="GO:0090141">
    <property type="term" value="P:positive regulation of mitochondrial fission"/>
    <property type="evidence" value="ECO:0007669"/>
    <property type="project" value="Ensembl"/>
</dbReference>
<dbReference type="GO" id="GO:0090023">
    <property type="term" value="P:positive regulation of neutrophil chemotaxis"/>
    <property type="evidence" value="ECO:0007669"/>
    <property type="project" value="Ensembl"/>
</dbReference>
<dbReference type="GO" id="GO:0050714">
    <property type="term" value="P:positive regulation of protein secretion"/>
    <property type="evidence" value="ECO:0007669"/>
    <property type="project" value="Ensembl"/>
</dbReference>
<dbReference type="GO" id="GO:1900244">
    <property type="term" value="P:positive regulation of synaptic vesicle endocytosis"/>
    <property type="evidence" value="ECO:0007669"/>
    <property type="project" value="Ensembl"/>
</dbReference>
<dbReference type="GO" id="GO:2000302">
    <property type="term" value="P:positive regulation of synaptic vesicle exocytosis"/>
    <property type="evidence" value="ECO:0007669"/>
    <property type="project" value="Ensembl"/>
</dbReference>
<dbReference type="GO" id="GO:0051259">
    <property type="term" value="P:protein complex oligomerization"/>
    <property type="evidence" value="ECO:0000250"/>
    <property type="project" value="UniProtKB"/>
</dbReference>
<dbReference type="GO" id="GO:0070585">
    <property type="term" value="P:protein localization to mitochondrion"/>
    <property type="evidence" value="ECO:0000315"/>
    <property type="project" value="MGI"/>
</dbReference>
<dbReference type="GO" id="GO:1903578">
    <property type="term" value="P:regulation of ATP metabolic process"/>
    <property type="evidence" value="ECO:0000315"/>
    <property type="project" value="ParkinsonsUK-UCL"/>
</dbReference>
<dbReference type="GO" id="GO:0010468">
    <property type="term" value="P:regulation of gene expression"/>
    <property type="evidence" value="ECO:0000315"/>
    <property type="project" value="MGI"/>
</dbReference>
<dbReference type="GO" id="GO:0010821">
    <property type="term" value="P:regulation of mitochondrion organization"/>
    <property type="evidence" value="ECO:0000315"/>
    <property type="project" value="ParkinsonsUK-UCL"/>
</dbReference>
<dbReference type="GO" id="GO:1901524">
    <property type="term" value="P:regulation of mitophagy"/>
    <property type="evidence" value="ECO:0007669"/>
    <property type="project" value="Ensembl"/>
</dbReference>
<dbReference type="GO" id="GO:1900063">
    <property type="term" value="P:regulation of peroxisome organization"/>
    <property type="evidence" value="ECO:0000315"/>
    <property type="project" value="ParkinsonsUK-UCL"/>
</dbReference>
<dbReference type="GO" id="GO:0034976">
    <property type="term" value="P:response to endoplasmic reticulum stress"/>
    <property type="evidence" value="ECO:0007669"/>
    <property type="project" value="Ensembl"/>
</dbReference>
<dbReference type="GO" id="GO:1905395">
    <property type="term" value="P:response to flavonoid"/>
    <property type="evidence" value="ECO:0007669"/>
    <property type="project" value="Ensembl"/>
</dbReference>
<dbReference type="GO" id="GO:1990910">
    <property type="term" value="P:response to hypobaric hypoxia"/>
    <property type="evidence" value="ECO:0007669"/>
    <property type="project" value="Ensembl"/>
</dbReference>
<dbReference type="GO" id="GO:0048511">
    <property type="term" value="P:rhythmic process"/>
    <property type="evidence" value="ECO:0007669"/>
    <property type="project" value="UniProtKB-KW"/>
</dbReference>
<dbReference type="GO" id="GO:0048488">
    <property type="term" value="P:synaptic vesicle endocytosis"/>
    <property type="evidence" value="ECO:0007669"/>
    <property type="project" value="Ensembl"/>
</dbReference>
<dbReference type="GO" id="GO:0036466">
    <property type="term" value="P:synaptic vesicle recycling via endosome"/>
    <property type="evidence" value="ECO:0007669"/>
    <property type="project" value="Ensembl"/>
</dbReference>
<dbReference type="CDD" id="cd08771">
    <property type="entry name" value="DLP_1"/>
    <property type="match status" value="1"/>
</dbReference>
<dbReference type="FunFam" id="1.20.120.1240:FF:000002">
    <property type="entry name" value="Dynamin-1-like protein isoform 1"/>
    <property type="match status" value="1"/>
</dbReference>
<dbReference type="FunFam" id="1.20.120.1240:FF:000006">
    <property type="entry name" value="Dynamin-1-like protein isoform 1"/>
    <property type="match status" value="1"/>
</dbReference>
<dbReference type="FunFam" id="3.40.50.300:FF:000172">
    <property type="entry name" value="Dynamin-1-like protein isoform 1"/>
    <property type="match status" value="1"/>
</dbReference>
<dbReference type="Gene3D" id="1.20.120.1240">
    <property type="entry name" value="Dynamin, middle domain"/>
    <property type="match status" value="2"/>
</dbReference>
<dbReference type="Gene3D" id="3.40.50.300">
    <property type="entry name" value="P-loop containing nucleotide triphosphate hydrolases"/>
    <property type="match status" value="1"/>
</dbReference>
<dbReference type="InterPro" id="IPR022812">
    <property type="entry name" value="Dynamin"/>
</dbReference>
<dbReference type="InterPro" id="IPR001401">
    <property type="entry name" value="Dynamin_GTPase"/>
</dbReference>
<dbReference type="InterPro" id="IPR019762">
    <property type="entry name" value="Dynamin_GTPase_CS"/>
</dbReference>
<dbReference type="InterPro" id="IPR045063">
    <property type="entry name" value="Dynamin_N"/>
</dbReference>
<dbReference type="InterPro" id="IPR000375">
    <property type="entry name" value="Dynamin_stalk"/>
</dbReference>
<dbReference type="InterPro" id="IPR030381">
    <property type="entry name" value="G_DYNAMIN_dom"/>
</dbReference>
<dbReference type="InterPro" id="IPR003130">
    <property type="entry name" value="GED"/>
</dbReference>
<dbReference type="InterPro" id="IPR020850">
    <property type="entry name" value="GED_dom"/>
</dbReference>
<dbReference type="InterPro" id="IPR027417">
    <property type="entry name" value="P-loop_NTPase"/>
</dbReference>
<dbReference type="PANTHER" id="PTHR11566">
    <property type="entry name" value="DYNAMIN"/>
    <property type="match status" value="1"/>
</dbReference>
<dbReference type="PANTHER" id="PTHR11566:SF39">
    <property type="entry name" value="DYNAMIN-1-LIKE PROTEIN"/>
    <property type="match status" value="1"/>
</dbReference>
<dbReference type="Pfam" id="PF01031">
    <property type="entry name" value="Dynamin_M"/>
    <property type="match status" value="1"/>
</dbReference>
<dbReference type="Pfam" id="PF00350">
    <property type="entry name" value="Dynamin_N"/>
    <property type="match status" value="1"/>
</dbReference>
<dbReference type="Pfam" id="PF02212">
    <property type="entry name" value="GED"/>
    <property type="match status" value="1"/>
</dbReference>
<dbReference type="PRINTS" id="PR00195">
    <property type="entry name" value="DYNAMIN"/>
</dbReference>
<dbReference type="SMART" id="SM00053">
    <property type="entry name" value="DYNc"/>
    <property type="match status" value="1"/>
</dbReference>
<dbReference type="SMART" id="SM00302">
    <property type="entry name" value="GED"/>
    <property type="match status" value="1"/>
</dbReference>
<dbReference type="SUPFAM" id="SSF52540">
    <property type="entry name" value="P-loop containing nucleoside triphosphate hydrolases"/>
    <property type="match status" value="1"/>
</dbReference>
<dbReference type="PROSITE" id="PS00410">
    <property type="entry name" value="G_DYNAMIN_1"/>
    <property type="match status" value="1"/>
</dbReference>
<dbReference type="PROSITE" id="PS51718">
    <property type="entry name" value="G_DYNAMIN_2"/>
    <property type="match status" value="1"/>
</dbReference>
<dbReference type="PROSITE" id="PS51388">
    <property type="entry name" value="GED"/>
    <property type="match status" value="1"/>
</dbReference>
<reference key="1">
    <citation type="journal article" date="2003" name="Biochem. Biophys. Res. Commun.">
        <title>Stage-specific enhanced expression of mitochondrial fusion and fission factors during spermatogenesis in rat testis.</title>
        <authorList>
            <person name="Honda S."/>
            <person name="Hirose S."/>
        </authorList>
    </citation>
    <scope>NUCLEOTIDE SEQUENCE [MRNA] (ISOFORM 2)</scope>
    <source>
        <tissue>Osteoclast</tissue>
    </source>
</reference>
<reference key="2">
    <citation type="journal article" date="2018" name="J. Biol. Chem.">
        <title>A brain-enriched Drp1 isoform associates with lysosomes, late endosomes, and the plasma membrane.</title>
        <authorList>
            <person name="Itoh K."/>
            <person name="Adachi Y."/>
            <person name="Yamada T."/>
            <person name="Suzuki T.L."/>
            <person name="Otomo T."/>
            <person name="McBride H.M."/>
            <person name="Yoshimori T."/>
            <person name="Iijima M."/>
            <person name="Sesaki H."/>
        </authorList>
    </citation>
    <scope>NUCLEOTIDE SEQUENCE [MRNA] (ISOFORMS 3; 6; 7; 8; 9; 10; 11; 12; 13; 14)</scope>
    <scope>ALTERNATIVE SPLICING</scope>
    <scope>TISSUE SPECIFICITY</scope>
    <scope>FUNCTION</scope>
    <scope>CATALYTIC ACTIVITY</scope>
    <scope>SUBCELLULAR LOCATION</scope>
    <scope>MUTAGENESIS OF LYS-38 AND GLY-369 (ISOFORM 14)</scope>
</reference>
<reference key="3">
    <citation type="journal article" date="2005" name="Science">
        <title>The transcriptional landscape of the mammalian genome.</title>
        <authorList>
            <person name="Carninci P."/>
            <person name="Kasukawa T."/>
            <person name="Katayama S."/>
            <person name="Gough J."/>
            <person name="Frith M.C."/>
            <person name="Maeda N."/>
            <person name="Oyama R."/>
            <person name="Ravasi T."/>
            <person name="Lenhard B."/>
            <person name="Wells C."/>
            <person name="Kodzius R."/>
            <person name="Shimokawa K."/>
            <person name="Bajic V.B."/>
            <person name="Brenner S.E."/>
            <person name="Batalov S."/>
            <person name="Forrest A.R."/>
            <person name="Zavolan M."/>
            <person name="Davis M.J."/>
            <person name="Wilming L.G."/>
            <person name="Aidinis V."/>
            <person name="Allen J.E."/>
            <person name="Ambesi-Impiombato A."/>
            <person name="Apweiler R."/>
            <person name="Aturaliya R.N."/>
            <person name="Bailey T.L."/>
            <person name="Bansal M."/>
            <person name="Baxter L."/>
            <person name="Beisel K.W."/>
            <person name="Bersano T."/>
            <person name="Bono H."/>
            <person name="Chalk A.M."/>
            <person name="Chiu K.P."/>
            <person name="Choudhary V."/>
            <person name="Christoffels A."/>
            <person name="Clutterbuck D.R."/>
            <person name="Crowe M.L."/>
            <person name="Dalla E."/>
            <person name="Dalrymple B.P."/>
            <person name="de Bono B."/>
            <person name="Della Gatta G."/>
            <person name="di Bernardo D."/>
            <person name="Down T."/>
            <person name="Engstrom P."/>
            <person name="Fagiolini M."/>
            <person name="Faulkner G."/>
            <person name="Fletcher C.F."/>
            <person name="Fukushima T."/>
            <person name="Furuno M."/>
            <person name="Futaki S."/>
            <person name="Gariboldi M."/>
            <person name="Georgii-Hemming P."/>
            <person name="Gingeras T.R."/>
            <person name="Gojobori T."/>
            <person name="Green R.E."/>
            <person name="Gustincich S."/>
            <person name="Harbers M."/>
            <person name="Hayashi Y."/>
            <person name="Hensch T.K."/>
            <person name="Hirokawa N."/>
            <person name="Hill D."/>
            <person name="Huminiecki L."/>
            <person name="Iacono M."/>
            <person name="Ikeo K."/>
            <person name="Iwama A."/>
            <person name="Ishikawa T."/>
            <person name="Jakt M."/>
            <person name="Kanapin A."/>
            <person name="Katoh M."/>
            <person name="Kawasawa Y."/>
            <person name="Kelso J."/>
            <person name="Kitamura H."/>
            <person name="Kitano H."/>
            <person name="Kollias G."/>
            <person name="Krishnan S.P."/>
            <person name="Kruger A."/>
            <person name="Kummerfeld S.K."/>
            <person name="Kurochkin I.V."/>
            <person name="Lareau L.F."/>
            <person name="Lazarevic D."/>
            <person name="Lipovich L."/>
            <person name="Liu J."/>
            <person name="Liuni S."/>
            <person name="McWilliam S."/>
            <person name="Madan Babu M."/>
            <person name="Madera M."/>
            <person name="Marchionni L."/>
            <person name="Matsuda H."/>
            <person name="Matsuzawa S."/>
            <person name="Miki H."/>
            <person name="Mignone F."/>
            <person name="Miyake S."/>
            <person name="Morris K."/>
            <person name="Mottagui-Tabar S."/>
            <person name="Mulder N."/>
            <person name="Nakano N."/>
            <person name="Nakauchi H."/>
            <person name="Ng P."/>
            <person name="Nilsson R."/>
            <person name="Nishiguchi S."/>
            <person name="Nishikawa S."/>
            <person name="Nori F."/>
            <person name="Ohara O."/>
            <person name="Okazaki Y."/>
            <person name="Orlando V."/>
            <person name="Pang K.C."/>
            <person name="Pavan W.J."/>
            <person name="Pavesi G."/>
            <person name="Pesole G."/>
            <person name="Petrovsky N."/>
            <person name="Piazza S."/>
            <person name="Reed J."/>
            <person name="Reid J.F."/>
            <person name="Ring B.Z."/>
            <person name="Ringwald M."/>
            <person name="Rost B."/>
            <person name="Ruan Y."/>
            <person name="Salzberg S.L."/>
            <person name="Sandelin A."/>
            <person name="Schneider C."/>
            <person name="Schoenbach C."/>
            <person name="Sekiguchi K."/>
            <person name="Semple C.A."/>
            <person name="Seno S."/>
            <person name="Sessa L."/>
            <person name="Sheng Y."/>
            <person name="Shibata Y."/>
            <person name="Shimada H."/>
            <person name="Shimada K."/>
            <person name="Silva D."/>
            <person name="Sinclair B."/>
            <person name="Sperling S."/>
            <person name="Stupka E."/>
            <person name="Sugiura K."/>
            <person name="Sultana R."/>
            <person name="Takenaka Y."/>
            <person name="Taki K."/>
            <person name="Tammoja K."/>
            <person name="Tan S.L."/>
            <person name="Tang S."/>
            <person name="Taylor M.S."/>
            <person name="Tegner J."/>
            <person name="Teichmann S.A."/>
            <person name="Ueda H.R."/>
            <person name="van Nimwegen E."/>
            <person name="Verardo R."/>
            <person name="Wei C.L."/>
            <person name="Yagi K."/>
            <person name="Yamanishi H."/>
            <person name="Zabarovsky E."/>
            <person name="Zhu S."/>
            <person name="Zimmer A."/>
            <person name="Hide W."/>
            <person name="Bult C."/>
            <person name="Grimmond S.M."/>
            <person name="Teasdale R.D."/>
            <person name="Liu E.T."/>
            <person name="Brusic V."/>
            <person name="Quackenbush J."/>
            <person name="Wahlestedt C."/>
            <person name="Mattick J.S."/>
            <person name="Hume D.A."/>
            <person name="Kai C."/>
            <person name="Sasaki D."/>
            <person name="Tomaru Y."/>
            <person name="Fukuda S."/>
            <person name="Kanamori-Katayama M."/>
            <person name="Suzuki M."/>
            <person name="Aoki J."/>
            <person name="Arakawa T."/>
            <person name="Iida J."/>
            <person name="Imamura K."/>
            <person name="Itoh M."/>
            <person name="Kato T."/>
            <person name="Kawaji H."/>
            <person name="Kawagashira N."/>
            <person name="Kawashima T."/>
            <person name="Kojima M."/>
            <person name="Kondo S."/>
            <person name="Konno H."/>
            <person name="Nakano K."/>
            <person name="Ninomiya N."/>
            <person name="Nishio T."/>
            <person name="Okada M."/>
            <person name="Plessy C."/>
            <person name="Shibata K."/>
            <person name="Shiraki T."/>
            <person name="Suzuki S."/>
            <person name="Tagami M."/>
            <person name="Waki K."/>
            <person name="Watahiki A."/>
            <person name="Okamura-Oho Y."/>
            <person name="Suzuki H."/>
            <person name="Kawai J."/>
            <person name="Hayashizaki Y."/>
        </authorList>
    </citation>
    <scope>NUCLEOTIDE SEQUENCE [LARGE SCALE MRNA] (ISOFORM 3)</scope>
    <source>
        <strain>C57BL/6J</strain>
        <tissue>Adipose tissue</tissue>
        <tissue>Spinal ganglion</tissue>
    </source>
</reference>
<reference key="4">
    <citation type="journal article" date="2009" name="PLoS Biol.">
        <title>Lineage-specific biology revealed by a finished genome assembly of the mouse.</title>
        <authorList>
            <person name="Church D.M."/>
            <person name="Goodstadt L."/>
            <person name="Hillier L.W."/>
            <person name="Zody M.C."/>
            <person name="Goldstein S."/>
            <person name="She X."/>
            <person name="Bult C.J."/>
            <person name="Agarwala R."/>
            <person name="Cherry J.L."/>
            <person name="DiCuccio M."/>
            <person name="Hlavina W."/>
            <person name="Kapustin Y."/>
            <person name="Meric P."/>
            <person name="Maglott D."/>
            <person name="Birtle Z."/>
            <person name="Marques A.C."/>
            <person name="Graves T."/>
            <person name="Zhou S."/>
            <person name="Teague B."/>
            <person name="Potamousis K."/>
            <person name="Churas C."/>
            <person name="Place M."/>
            <person name="Herschleb J."/>
            <person name="Runnheim R."/>
            <person name="Forrest D."/>
            <person name="Amos-Landgraf J."/>
            <person name="Schwartz D.C."/>
            <person name="Cheng Z."/>
            <person name="Lindblad-Toh K."/>
            <person name="Eichler E.E."/>
            <person name="Ponting C.P."/>
        </authorList>
    </citation>
    <scope>NUCLEOTIDE SEQUENCE [LARGE SCALE GENOMIC DNA]</scope>
    <source>
        <strain>C57BL/6J</strain>
    </source>
</reference>
<reference key="5">
    <citation type="journal article" date="2004" name="Genome Res.">
        <title>The status, quality, and expansion of the NIH full-length cDNA project: the Mammalian Gene Collection (MGC).</title>
        <authorList>
            <consortium name="The MGC Project Team"/>
        </authorList>
    </citation>
    <scope>NUCLEOTIDE SEQUENCE [LARGE SCALE MRNA] (ISOFORMS 3; 4 AND 5)</scope>
    <source>
        <strain>C57BL/6J</strain>
        <tissue>Brain</tissue>
        <tissue>Mammary gland</tissue>
        <tissue>Thymus</tissue>
    </source>
</reference>
<reference key="6">
    <citation type="submission" date="2007-03" db="UniProtKB">
        <authorList>
            <person name="Lubec G."/>
            <person name="Klug S."/>
        </authorList>
    </citation>
    <scope>PROTEIN SEQUENCE OF 620-634 AND 719-731</scope>
    <scope>IDENTIFICATION BY MASS SPECTROMETRY</scope>
    <source>
        <tissue>Hippocampus</tissue>
    </source>
</reference>
<reference key="7">
    <citation type="journal article" date="1998" name="J. Biol. Chem.">
        <title>Dymple, a novel dynamin-like high molecular weight GTPase lacking a proline-rich carboxyl-terminal domain in mammalian cells.</title>
        <authorList>
            <person name="Kamimoto T."/>
            <person name="Nagai Y."/>
            <person name="Onogi H."/>
            <person name="Muro Y."/>
            <person name="Wakabayashi T."/>
            <person name="Hagiwara M."/>
        </authorList>
    </citation>
    <scope>TISSUE SPECIFICITY</scope>
</reference>
<reference key="8">
    <citation type="journal article" date="2009" name="J. Cell Biol.">
        <title>The dynamin-related GTPase Drp1 is required for embryonic and brain development in mice.</title>
        <authorList>
            <person name="Wakabayashi J."/>
            <person name="Zhang Z."/>
            <person name="Wakabayashi N."/>
            <person name="Tamura Y."/>
            <person name="Fukaya M."/>
            <person name="Kensler T.W."/>
            <person name="Iijima M."/>
            <person name="Sesaki H."/>
        </authorList>
    </citation>
    <scope>FUNCTION</scope>
    <scope>DISRUPTION PHENOTYPE</scope>
    <scope>CONDITIONAL KNOCKOUT IN PURKINJE CELLS</scope>
</reference>
<reference key="9">
    <citation type="journal article" date="2009" name="Nat. Cell Biol.">
        <title>Mitochondrial fission factor Drp1 is essential for embryonic development and synapse formation in mice.</title>
        <authorList>
            <person name="Ishihara N."/>
            <person name="Nomura M."/>
            <person name="Jofuku A."/>
            <person name="Kato H."/>
            <person name="Suzuki S.O."/>
            <person name="Masuda K."/>
            <person name="Otera H."/>
            <person name="Nakanishi Y."/>
            <person name="Nonaka I."/>
            <person name="Goto Y."/>
            <person name="Taguchi N."/>
            <person name="Morinaga H."/>
            <person name="Maeda M."/>
            <person name="Takayanagi R."/>
            <person name="Yokota S."/>
            <person name="Mihara K."/>
        </authorList>
    </citation>
    <scope>DISRUPTION PHENOTYPE</scope>
    <scope>FUNCTION</scope>
</reference>
<reference key="10">
    <citation type="journal article" date="2010" name="Cell">
        <title>A tissue-specific atlas of mouse protein phosphorylation and expression.</title>
        <authorList>
            <person name="Huttlin E.L."/>
            <person name="Jedrychowski M.P."/>
            <person name="Elias J.E."/>
            <person name="Goswami T."/>
            <person name="Rad R."/>
            <person name="Beausoleil S.A."/>
            <person name="Villen J."/>
            <person name="Haas W."/>
            <person name="Sowa M.E."/>
            <person name="Gygi S.P."/>
        </authorList>
    </citation>
    <scope>PHOSPHORYLATION [LARGE SCALE ANALYSIS] AT SER-616</scope>
    <scope>IDENTIFICATION BY MASS SPECTROMETRY [LARGE SCALE ANALYSIS]</scope>
    <source>
        <tissue>Brain</tissue>
        <tissue>Brown adipose tissue</tissue>
        <tissue>Heart</tissue>
        <tissue>Kidney</tissue>
        <tissue>Liver</tissue>
        <tissue>Lung</tissue>
        <tissue>Pancreas</tissue>
        <tissue>Spleen</tissue>
        <tissue>Testis</tissue>
    </source>
</reference>
<reference key="11">
    <citation type="journal article" date="2012" name="J. Cell Biol.">
        <title>Mitochondrial division ensures the survival of postmitotic neurons by suppressing oxidative damage.</title>
        <authorList>
            <person name="Kageyama Y."/>
            <person name="Zhang Z."/>
            <person name="Roda R."/>
            <person name="Fukaya M."/>
            <person name="Wakabayashi J."/>
            <person name="Wakabayashi N."/>
            <person name="Kensler T.W."/>
            <person name="Reddy P.H."/>
            <person name="Iijima M."/>
            <person name="Sesaki H."/>
        </authorList>
    </citation>
    <scope>FUNCTION</scope>
    <scope>DISRUPTION PHENOTYPE</scope>
    <scope>CONDITIONAL KNOCKOUT IN PURKINJE CELLS</scope>
</reference>
<reference key="12">
    <citation type="journal article" date="2013" name="Mol. Biol. Cell">
        <title>Fis1, Mff, MiD49, and MiD51 mediate Drp1 recruitment in mitochondrial fission.</title>
        <authorList>
            <person name="Loson O.C."/>
            <person name="Song Z."/>
            <person name="Chen H."/>
            <person name="Chan D.C."/>
        </authorList>
    </citation>
    <scope>FUNCTION</scope>
    <scope>SUBCELLULAR LOCATION</scope>
</reference>
<reference key="13">
    <citation type="journal article" date="2013" name="Mol. Cell">
        <title>SIRT5-mediated lysine desuccinylation impacts diverse metabolic pathways.</title>
        <authorList>
            <person name="Park J."/>
            <person name="Chen Y."/>
            <person name="Tishkoff D.X."/>
            <person name="Peng C."/>
            <person name="Tan M."/>
            <person name="Dai L."/>
            <person name="Xie Z."/>
            <person name="Zhang Y."/>
            <person name="Zwaans B.M."/>
            <person name="Skinner M.E."/>
            <person name="Lombard D.B."/>
            <person name="Zhao Y."/>
        </authorList>
    </citation>
    <scope>ACETYLATION [LARGE SCALE ANALYSIS] AT LYS-597</scope>
    <scope>IDENTIFICATION BY MASS SPECTROMETRY [LARGE SCALE ANALYSIS]</scope>
    <source>
        <tissue>Embryonic fibroblast</tissue>
    </source>
</reference>
<reference key="14">
    <citation type="journal article" date="2014" name="Structure">
        <title>The mitochondrial fission receptor Mid51 requires ADP as a cofactor.</title>
        <authorList>
            <person name="Loson O.C."/>
            <person name="Liu R."/>
            <person name="Rome M.E."/>
            <person name="Meng S."/>
            <person name="Kaiser J.T."/>
            <person name="Shan S.O."/>
            <person name="Chan D.C."/>
        </authorList>
    </citation>
    <scope>FUNCTION</scope>
    <scope>SUBCELLULAR LOCATION</scope>
    <scope>MUTAGENESIS OF THR-59</scope>
    <scope>CATALYTIC ACTIVITY</scope>
    <scope>INTERACTION WITH MIEF1</scope>
</reference>
<reference key="15">
    <citation type="journal article" date="2018" name="Cell Metab.">
        <title>Circadian control of DRP1 activity regulates mitochondrial dynamics and bioenergetics.</title>
        <authorList>
            <person name="Schmitt K."/>
            <person name="Grimm A."/>
            <person name="Dallmann R."/>
            <person name="Oettinghaus B."/>
            <person name="Restelli L.M."/>
            <person name="Witzig M."/>
            <person name="Ishihara N."/>
            <person name="Mihara K."/>
            <person name="Ripperger J.A."/>
            <person name="Albrecht U."/>
            <person name="Frank S."/>
            <person name="Brown S.A."/>
            <person name="Eckert A."/>
        </authorList>
    </citation>
    <scope>FUNCTION</scope>
</reference>
<reference key="16">
    <citation type="journal article" date="2018" name="Endocrinology">
        <title>A Genetic Interaction Map of Insulin Production Identifies Mfi as an Inhibitor of Mitochondrial Fission.</title>
        <authorList>
            <person name="Lee J."/>
            <person name="Pappalardo Z."/>
            <person name="Chopra D.G."/>
            <person name="Hennings T.G."/>
            <person name="Vaughn I."/>
            <person name="Lan C."/>
            <person name="Choe J.J."/>
            <person name="Ang K."/>
            <person name="Chen S."/>
            <person name="Arkin M."/>
            <person name="McManus M.T."/>
            <person name="German M.S."/>
            <person name="Ku G.M."/>
        </authorList>
    </citation>
    <scope>INTERACTION WITH MFF</scope>
    <scope>SUBCELLULAR LOCATION</scope>
</reference>
<reference key="17">
    <citation type="journal article" date="2019" name="Elife">
        <title>Brain-specific Drp1 regulates postsynaptic endocytosis and dendrite formation independently of mitochondrial division.</title>
        <authorList>
            <person name="Itoh K."/>
            <person name="Murata D."/>
            <person name="Kato T."/>
            <person name="Yamada T."/>
            <person name="Araki Y."/>
            <person name="Saito A."/>
            <person name="Adachi Y."/>
            <person name="Igarashi A."/>
            <person name="Li S."/>
            <person name="Pletnikov M."/>
            <person name="Huganir R.L."/>
            <person name="Watanabe S."/>
            <person name="Kamiya A."/>
            <person name="Iijima M."/>
            <person name="Sesaki H."/>
        </authorList>
    </citation>
    <scope>FUNCTION (ISOFORM 14)</scope>
    <scope>TISSUE SPECIFICITY (ISOFORM 14)</scope>
    <scope>DISRUPTION PHENOTYPE (ISOFORM 14)</scope>
    <scope>SUBCELLULAR LOCATION (ISOFORM 14)</scope>
</reference>
<reference key="18">
    <citation type="journal article" date="2020" name="EMBO Rep.">
        <title>PINK1 phosphorylates Drp1S616 to regulate mitophagy-independent mitochondrial dynamics.</title>
        <authorList>
            <person name="Han H."/>
            <person name="Tan J."/>
            <person name="Wang R."/>
            <person name="Wan H."/>
            <person name="He Y."/>
            <person name="Yan X."/>
            <person name="Guo J."/>
            <person name="Gao Q."/>
            <person name="Li J."/>
            <person name="Shang S."/>
            <person name="Chen F."/>
            <person name="Tian R."/>
            <person name="Liu W."/>
            <person name="Liao L."/>
            <person name="Tang B."/>
            <person name="Zhang Z."/>
        </authorList>
    </citation>
    <scope>FUNCTION</scope>
    <scope>PHOSPHORYLATION AT SER-616</scope>
    <scope>MUTAGENESIS OF SER-616</scope>
</reference>
<organism>
    <name type="scientific">Mus musculus</name>
    <name type="common">Mouse</name>
    <dbReference type="NCBI Taxonomy" id="10090"/>
    <lineage>
        <taxon>Eukaryota</taxon>
        <taxon>Metazoa</taxon>
        <taxon>Chordata</taxon>
        <taxon>Craniata</taxon>
        <taxon>Vertebrata</taxon>
        <taxon>Euteleostomi</taxon>
        <taxon>Mammalia</taxon>
        <taxon>Eutheria</taxon>
        <taxon>Euarchontoglires</taxon>
        <taxon>Glires</taxon>
        <taxon>Rodentia</taxon>
        <taxon>Myomorpha</taxon>
        <taxon>Muroidea</taxon>
        <taxon>Muridae</taxon>
        <taxon>Murinae</taxon>
        <taxon>Mus</taxon>
        <taxon>Mus</taxon>
    </lineage>
</organism>
<comment type="function">
    <text evidence="2 7 8 9 10 11 12 13 16">Functions in mitochondrial and peroxisomal division (PubMed:19578372, PubMed:19752021, PubMed:22564413, PubMed:23283981, PubMed:24508339, PubMed:29478834, PubMed:29853636, PubMed:32484300). Mediates membrane fission through oligomerization into membrane-associated tubular structures that wrap around the scission site to constrict and sever the mitochondrial membrane through a GTP hydrolysis-dependent mechanism (PubMed:24508339). The specific recruitment at scission sites is mediated by membrane receptors like MFF, MIEF1 and MIEF2 for mitochondrial membranes (PubMed:23283981, PubMed:24508339). While the recruitment by the membrane receptors is GTP-dependent, the following hydrolysis of GTP induces the dissociation from the receptors and allows DNM1L filaments to curl into closed rings that are probably sufficient to sever a double membrane (PubMed:24508339). Acts downstream of PINK1 to promote mitochondrial fission in a PRKN-dependent manner (PubMed:32484300). Plays an important role in mitochondrial fission during mitosis (By similarity). Required for formation of endocytic vesicles (By similarity). Through its function in mitochondrial division, ensures the survival of at least some types of postmitotic neurons, including Purkinje cells, by suppressing oxidative damage (PubMed:19752021, PubMed:22564413). Required for normal brain development, including that of cerebellum (PubMed:19578372, PubMed:22564413). Facilitates developmentally regulated apoptosis during neural tube formation (PubMed:19578372). Required for a normal rate of cytochrome c release and caspase activation during apoptosis; this requirement may depend upon the cell type and the physiological apoptotic cues (PubMed:19578372). Proposed to regulate synaptic vesicle membrane dynamics through association with BCL2L1 isoform Bcl-X(L) which stimulates its GTPase activity in synaptic vesicles; the function may require its recruitment by MFF to clathrin-containing vesicles (By similarity). Required for programmed necrosis execution (By similarity). Rhythmic control of its activity following phosphorylation at Ser-637 is essential for the circadian control of mitochondrial ATP production (PubMed:29478834).</text>
</comment>
<comment type="function">
    <molecule>Isoform 14</molecule>
    <text evidence="15">Regulates postsynaptic clathrin-mediated endocytosis by positioning the endocytic zone at the postsynaptic density, independently of mitochondrial division.</text>
</comment>
<comment type="catalytic activity">
    <reaction evidence="11 13">
        <text>GTP + H2O = GDP + phosphate + H(+)</text>
        <dbReference type="Rhea" id="RHEA:19669"/>
        <dbReference type="ChEBI" id="CHEBI:15377"/>
        <dbReference type="ChEBI" id="CHEBI:15378"/>
        <dbReference type="ChEBI" id="CHEBI:37565"/>
        <dbReference type="ChEBI" id="CHEBI:43474"/>
        <dbReference type="ChEBI" id="CHEBI:58189"/>
        <dbReference type="EC" id="3.6.5.5"/>
    </reaction>
</comment>
<comment type="subunit">
    <text evidence="2 11 14">Homotetramer; dimerizes through the N-terminal GTP-middle region of one molecule binding to the GED domain of another DNM1L molecule. Oligomerizes in a GTP-dependent manner to form membrane-associated tubules with a spiral pattern. Interacts with GSK3B and MARCHF5. Interacts (via the GTPase and B domains) with UBE2I; the interaction promotes sumoylation of DNM1L, mainly in its B domain. Interacts with PPP3CA; the interaction dephosphorylates DNM1L and regulates its transition to mitochondria. Interacts with BCL2L1 isoform BCL-X(L) and CLTA; DNM1L and BCL2L1 isoform BCL-X(L) may form a complex in synaptic vesicles that also contains clathrin and MFF. Interacts with MFF; the interaction is inhibited by C11orf65/MFI (PubMed:30059978). Interacts with FIS1. Interacts with MIEF2 and MIEF1; GTP-dependent, regulates GTP hydrolysis and DNM1L oligomerization (PubMed:24508339). Interacts with PGAM5; this interaction leads to dephosphorylation at Ser-656 and activation of GTPase activity and eventually to mitochondria fragmentation. Interacts with RALBP1; during mitosis, recruits DNM1L to the mitochondrion and mediates its activation by the mitotic kinase cyclin B-CDK1 (By similarity). Interacts with FUNDC1; this interaction recruits DNM1L/DRP1 at ER-mitochondria contact sites (By similarity).</text>
</comment>
<comment type="interaction">
    <interactant intactId="EBI-2365792">
        <id>Q8K1M6</id>
    </interactant>
    <interactant intactId="EBI-772703">
        <id>Q925I1</id>
        <label>Atad3</label>
    </interactant>
    <organismsDiffer>false</organismsDiffer>
    <experiments>13</experiments>
</comment>
<comment type="interaction">
    <interactant intactId="EBI-2365792">
        <id>Q8K1M6</id>
    </interactant>
    <interactant intactId="EBI-2693710">
        <id>Q5S006</id>
        <label>Lrrk2</label>
    </interactant>
    <organismsDiffer>false</organismsDiffer>
    <experiments>5</experiments>
</comment>
<comment type="interaction">
    <interactant intactId="EBI-2365792">
        <id>Q8K1M6</id>
    </interactant>
    <interactant intactId="EBI-21985996">
        <id>Q6PCP5</id>
        <label>Mff</label>
    </interactant>
    <organismsDiffer>false</organismsDiffer>
    <experiments>2</experiments>
</comment>
<comment type="interaction">
    <interactant intactId="EBI-2365792">
        <id>Q8K1M6</id>
    </interactant>
    <interactant intactId="EBI-16092561">
        <id>Q8BGV8</id>
        <label>Mief1</label>
    </interactant>
    <organismsDiffer>false</organismsDiffer>
    <experiments>2</experiments>
</comment>
<comment type="interaction">
    <interactant intactId="EBI-16092613">
        <id>Q8K1M6-3</id>
    </interactant>
    <interactant intactId="EBI-16092561">
        <id>Q8BGV8</id>
        <label>Mief1</label>
    </interactant>
    <organismsDiffer>false</organismsDiffer>
    <experiments>5</experiments>
</comment>
<comment type="interaction">
    <interactant intactId="EBI-16092613">
        <id>Q8K1M6-3</id>
    </interactant>
    <interactant intactId="EBI-16092669">
        <id>Q5NCS9</id>
        <label>Mief2</label>
    </interactant>
    <organismsDiffer>false</organismsDiffer>
    <experiments>2</experiments>
</comment>
<comment type="subcellular location">
    <subcellularLocation>
        <location evidence="14">Cytoplasm</location>
        <location evidence="14">Cytosol</location>
    </subcellularLocation>
    <subcellularLocation>
        <location evidence="2">Golgi apparatus</location>
    </subcellularLocation>
    <subcellularLocation>
        <location evidence="2">Endomembrane system</location>
    </subcellularLocation>
    <subcellularLocation>
        <location evidence="14 21">Mitochondrion outer membrane</location>
        <topology>Peripheral membrane protein</topology>
    </subcellularLocation>
    <subcellularLocation>
        <location evidence="13">Peroxisome</location>
    </subcellularLocation>
    <subcellularLocation>
        <location evidence="3">Membrane</location>
        <location evidence="3">Clathrin-coated pit</location>
    </subcellularLocation>
    <subcellularLocation>
        <location evidence="3">Cytoplasmic vesicle</location>
        <location evidence="3">Secretory vesicle</location>
        <location evidence="3">Synaptic vesicle membrane</location>
    </subcellularLocation>
    <text evidence="1 2 14">Mainly cytosolic. Recruited by RALA and RALBP1 to mitochondrion during mitosis (By similarity). Translocated to the mitochondrial membrane through O-GlcNAcylation and interaction with FIS1. Colocalized with MARCHF5 at mitochondrial membrane. Localizes to mitochondria at sites of division. Localizes to mitochondria following necrosis induction. Recruited to the mitochondrial outer membrane by interaction with MIEF1. Mitochondrial recruitment is inhibited by C11orf65/MFI (PubMed:30059978). Associated with peroxisomal membranes, partly recruited there by PEX11B. May also be associated with endoplasmic reticulum tubules and cytoplasmic vesicles and found to be perinuclear. In some cell types, localizes to the Golgi complex (By similarity). Binds to phospholipid membranes.</text>
</comment>
<comment type="subcellular location">
    <molecule>Isoform 14</molecule>
    <subcellularLocation>
        <location evidence="13">Lysosome</location>
    </subcellularLocation>
    <subcellularLocation>
        <location evidence="13">Late endosome</location>
    </subcellularLocation>
    <subcellularLocation>
        <location evidence="13">Cell membrane</location>
        <topology>Peripheral membrane protein</topology>
    </subcellularLocation>
    <subcellularLocation>
        <location evidence="13">Mitochondrion outer membrane</location>
        <topology>Peripheral membrane protein</topology>
    </subcellularLocation>
    <subcellularLocation>
        <location evidence="15">Postsynaptic density</location>
    </subcellularLocation>
    <text evidence="13">Is recruited to existing interorganelle interfaces between mitochondria and lysosomes/ late endosomes (PubMed:29853636). GTP hydrolysis and oligomerization are required for its localization to lysosomes/late endosomes and the cell membrane (PubMed:29853636).</text>
</comment>
<comment type="alternative products">
    <event type="alternative splicing"/>
    <isoform>
        <id>Q8K1M6-12</id>
        <name>12</name>
        <name evidence="18">Drp1-CD</name>
        <sequence type="displayed"/>
    </isoform>
    <isoform>
        <id>Q8K1M6-2</id>
        <name>2</name>
        <sequence type="described" ref="VSP_062252 VSP_062256"/>
    </isoform>
    <isoform>
        <id>Q8K1M6-3</id>
        <name>3</name>
        <name evidence="18">S-Drp1</name>
        <sequence type="described" ref="VSP_062255"/>
    </isoform>
    <isoform>
        <id>Q8K1M6-4</id>
        <name>4</name>
        <sequence type="described" ref="VSP_062249 VSP_062256"/>
    </isoform>
    <isoform>
        <id>Q8K1M6-5</id>
        <name>5</name>
        <sequence type="described" ref="VSP_062253 VSP_062254"/>
    </isoform>
    <isoform>
        <id>Q8K1M6-6</id>
        <name>6</name>
        <name evidence="18">Drp1-B</name>
        <sequence type="described" ref="VSP_062250 VSP_062255"/>
    </isoform>
    <isoform>
        <id>Q8K1M6-7</id>
        <name>7</name>
        <name evidence="18">Drp1-A</name>
        <sequence type="described" ref="VSP_062252 VSP_062255"/>
    </isoform>
    <isoform>
        <id>Q8K1M6-8</id>
        <name>8</name>
        <name evidence="18">Drp1-C</name>
        <sequence type="described" ref="VSP_062257"/>
    </isoform>
    <isoform>
        <id>Q8K1M6-9</id>
        <name>9</name>
        <name evidence="18">Drp1-D</name>
        <sequence type="described" ref="VSP_062256"/>
    </isoform>
    <isoform>
        <id>Q8K1M6-10</id>
        <name>10</name>
        <name evidence="18">Drp1-BC</name>
        <sequence type="described" ref="VSP_062250 VSP_062257"/>
    </isoform>
    <isoform>
        <id>Q8K1M6-11</id>
        <name>11</name>
        <name evidence="18">Drp1-BD</name>
        <sequence type="described" ref="VSP_062250 VSP_062256"/>
    </isoform>
    <isoform>
        <id>Q8K1M6-13</id>
        <name>13</name>
        <name evidence="18">Drp1-BCD</name>
        <sequence type="described" ref="VSP_062250"/>
    </isoform>
    <isoform>
        <id>Q8K1M6-14</id>
        <name>14</name>
        <name evidence="18">Drp1-ABCD</name>
        <sequence type="described" ref="VSP_062251"/>
    </isoform>
</comment>
<comment type="tissue specificity">
    <text evidence="17">Expressed in the cerebellum and in several regions of the cerebrum and diencephalon. Strongly expressed in the cerebellar Purkinje cells and in the pontile giant neurons.</text>
</comment>
<comment type="tissue specificity">
    <molecule>Isoform 3</molecule>
    <text evidence="13">Widely expressed.</text>
</comment>
<comment type="tissue specificity">
    <molecule>Isoform 13</molecule>
    <text evidence="13">Brain-specific.</text>
</comment>
<comment type="tissue specificity">
    <molecule>Isoform 14</molecule>
    <text evidence="13 15">Brain-specific (at protein level) (PubMed:29853636, PubMed:31603426). Expressed in most of the subregions of the brain, including the cerebellum, midbrain, hippocampus, striatum, cerebral cortex, and brain stem. Weakly expressed in the olfactory bulb (PubMed:29853636, PubMed:31603426).</text>
</comment>
<comment type="domain">
    <text evidence="2">The GED domain folds back to interact, in cis, with the GTP-binding domain and middle domain, and interacts, in trans, with the GED domains of other DNM1L molecules, and is thus critical for activating GTPase activity and for DNM1L dimerization.</text>
</comment>
<comment type="PTM">
    <text evidence="2 16">Phosphorylation/dephosphorylation events on two sites near the GED domain regulate mitochondrial fission (By similarity). Phosphorylation on Ser-637 inhibits mitochondrial fission probably through preventing intramolecular interaction (By similarity). Dephosphorylated on this site by PPP3CA which promotes mitochondrial fission (By similarity). Phosphorylation on Ser-616 by Pink1 activates the GTPase activity and promotes mitochondrial fission (PubMed:32484300). Phosphorylated in a circadian manner at Ser-637 (By similarity). Dephosphorylated by PGAM5 (By similarity).</text>
</comment>
<comment type="PTM">
    <text evidence="1">Sumoylated on various lysine residues within the B domain, probably by MUL1. Sumoylation positively regulates mitochondrial fission. Desumoylated by SENP5 during G2/M transition of mitosis. Appears to be linked to its catalytic activity (By similarity).</text>
</comment>
<comment type="PTM">
    <text evidence="1">S-nitrosylation increases DNM1L dimerization, mitochondrial fission and causes neuronal damage.</text>
</comment>
<comment type="PTM">
    <text evidence="3">O-GlcNAcylation augments the level of the GTP-bound active form of DNM1L and induces translocation from the cytoplasm to mitochondria in cardiomyocytes. It also decreases phosphorylation at Ser-637 (By similarity).</text>
</comment>
<comment type="PTM">
    <text evidence="2">Ubiquitination by MARCHF5 affects mitochondrial morphology.</text>
</comment>
<comment type="disruption phenotype">
    <text evidence="7 8 9 15">Mutant mice show severe developmental abnormalities and die between 10.5 and 12.5 dpc. Compared to wild-type littermates, mutant embryos at 9.5-11.5 dpc have a significantly smaller body size, pulsing, but less developed cardiac structures, a poorly developed liver and a thinner neural tube cell layer. They lack trophoblastic giant cell layer in the placenta. Primary cultures of mutant neuronal cells have severe defects in synapse formation and high sensitivity to Ca(2+)-dependent apoptosis. Within cerebellar neurons, Purkinje cells are particularly sensitive to Dnm1l ablation. Conditional knockout in postmitotic Purkinje cells leads to 40% neuronal degeneration after 3 months and 90% after 6 months. Homozygous mice lacking the DNM1L gene are born at an expected Mendelian ratio with normal weights of the body and brain (PubMed:31603426).</text>
</comment>
<comment type="similarity">
    <text evidence="5">Belongs to the TRAFAC class dynamin-like GTPase superfamily. Dynamin/Fzo/YdjA family.</text>
</comment>
<name>DNM1L_MOUSE</name>
<gene>
    <name evidence="22" type="primary">Dnm1l</name>
    <name evidence="18" type="synonym">Drp1</name>
</gene>